<comment type="function">
    <text evidence="9 10 22">Catalyzes the S-methylation of thiopurine drugs such as 6-mercaptopurine (also called mercaptopurine, 6-MP or its brand name Purinethol) and 6-thioguanine (also called tioguanine or 6-TG) using S-adenosyl-L-methionine as the methyl donor (PubMed:18484748, PubMed:657528). TPMT activity modulates the cytotoxic effects of thiopurine prodrugs. A natural substrate for this enzyme has yet to be identified.</text>
</comment>
<comment type="catalytic activity">
    <reaction evidence="9 10">
        <text>S-adenosyl-L-methionine + a thiopurine = S-adenosyl-L-homocysteine + a thiopurine S-methylether.</text>
        <dbReference type="EC" id="2.1.1.67"/>
    </reaction>
</comment>
<comment type="catalytic activity">
    <reaction evidence="9 10">
        <text>mercaptopurine + S-adenosyl-L-methionine = 6-methylthiopurine + S-adenosyl-L-homocysteine + H(+)</text>
        <dbReference type="Rhea" id="RHEA:12609"/>
        <dbReference type="ChEBI" id="CHEBI:15378"/>
        <dbReference type="ChEBI" id="CHEBI:28279"/>
        <dbReference type="ChEBI" id="CHEBI:50667"/>
        <dbReference type="ChEBI" id="CHEBI:57856"/>
        <dbReference type="ChEBI" id="CHEBI:59789"/>
        <dbReference type="EC" id="2.1.1.67"/>
    </reaction>
</comment>
<comment type="catalytic activity">
    <reaction evidence="10">
        <text>6-thioguanine + S-adenosyl-L-methionine = 6-methylthioguanine + S-adenosyl-L-homocysteine + H(+)</text>
        <dbReference type="Rhea" id="RHEA:56580"/>
        <dbReference type="ChEBI" id="CHEBI:9555"/>
        <dbReference type="ChEBI" id="CHEBI:15378"/>
        <dbReference type="ChEBI" id="CHEBI:57856"/>
        <dbReference type="ChEBI" id="CHEBI:59789"/>
        <dbReference type="ChEBI" id="CHEBI:140528"/>
        <dbReference type="EC" id="2.1.1.67"/>
    </reaction>
</comment>
<comment type="activity regulation">
    <text>Inhibited by S-adenosyl-L-homocysteine (SAH).</text>
</comment>
<comment type="biophysicochemical properties">
    <kinetics>
        <KM evidence="9">18.5 uM for S-adenosyl-L-methionine (at pH 6.5 and 37 degrees Celsius)</KM>
        <KM evidence="9">0.68 mM for 6-mercaptopurine (at pH 6.5 and 37 degrees Celsius)</KM>
        <KM evidence="10">1.7 uM for S-adenosyl-L-methionine (at pH 7.5 and 37 degrees Celsius)</KM>
        <KM evidence="10">0.32 mM for 6-mercaptopurine (at pH 7.5 and 37 degrees Celsius)</KM>
        <KM evidence="10">0.2 mM for 6-thioguanine (at pH 7.5 and 37 degrees Celsius)</KM>
        <Vmax evidence="9">1.23 nmol/sec/mg enzyme toward 6-mercaptopurine (at pH 6.5 and 37 degrees Celsius)</Vmax>
    </kinetics>
    <phDependence>
        <text evidence="10">Optimum pH is 7.5.</text>
    </phDependence>
</comment>
<comment type="subunit">
    <text evidence="8">Monomer.</text>
</comment>
<comment type="interaction">
    <interactant intactId="EBI-25902017">
        <id>P51580</id>
    </interactant>
    <interactant intactId="EBI-11742507">
        <id>Q8TAP4-4</id>
        <label>LMO3</label>
    </interactant>
    <organismsDiffer>false</organismsDiffer>
    <experiments>3</experiments>
</comment>
<comment type="interaction">
    <interactant intactId="EBI-25902017">
        <id>P51580</id>
    </interactant>
    <interactant intactId="EBI-9090795">
        <id>Q15047-2</id>
        <label>SETDB1</label>
    </interactant>
    <organismsDiffer>false</organismsDiffer>
    <experiments>3</experiments>
</comment>
<comment type="interaction">
    <interactant intactId="EBI-25902017">
        <id>P51580</id>
    </interactant>
    <interactant intactId="EBI-359832">
        <id>P61981</id>
        <label>YWHAG</label>
    </interactant>
    <organismsDiffer>false</organismsDiffer>
    <experiments>3</experiments>
</comment>
<comment type="subcellular location">
    <subcellularLocation>
        <location>Cytoplasm</location>
    </subcellularLocation>
</comment>
<comment type="polymorphism">
    <text evidence="2 3 4 5 6 7 11 12 13 14 15 16 17 18 19">Polymorphic variations define TPMT activity levels that are variable among ethnic groups. 90% of Caucasians have high TPMT activity, 10% have intermediate activity, and 1 in 300 individuals has low activity (PubMed:10208641). These differences influence the clinical use and therapeutic efficacy of thiopurine drugs, generally used as immunosuppressants or cytotoxic drugs in conditions including leukemia, autoimmune disease and organ transplantation. Intermediate or low TPMT activity is associated with thiopurine intolerance and patients are at risk of toxicity after receiving standard doses of thiopurine drugs [MIM:610460] (PubMed:10751626, PubMed:15819814, PubMed:16220112, PubMed:16476125, PubMed:16789994, PubMed:7862671, PubMed:8561894, PubMed:8644731, PubMed:9246020, PubMed:9336428, PubMed:9711875, PubMed:9931345, PubMed:9931346). The most prevalent TPMT alleles associated with TPMT deficiency are TPMT*2 and TPMT*3A. The proteins encoded by TPMT*2 and TPMT*3A mutant are degraded more rapidly by an ATP-dependent proteasome-mediated pathway (PubMed:8644731, PubMed:9177237).</text>
</comment>
<comment type="polymorphism">
    <text evidence="2 3 6">TPMT*3A is the most common allele in the Caucasians and American Caucasians; it is the only mutant allele found in the South West Asians; it is not found in the Chinese. TPMT*3C is common in African-Americans and is the only allele in Chinese, Japanese and Taiwanese individuals. This allele is found at a low frequency in the Caucasians. This suggests that TPMT*3C is the oldest mutation, with TPMT*3B being acquired later to form the TPMT*3A allele in the Caucasian and South West Asian populations. TPMT*2 appears to be a more recent allele, which has only been detected in Caucasians to date.</text>
</comment>
<comment type="similarity">
    <text evidence="22">Belongs to the class I-like SAM-binding methyltransferase superfamily. TPMT family.</text>
</comment>
<comment type="sequence caution" evidence="22">
    <conflict type="erroneous initiation">
        <sequence resource="EMBL-CDS" id="AAB71631"/>
    </conflict>
</comment>
<comment type="sequence caution" evidence="22">
    <conflict type="erroneous initiation">
        <sequence resource="EMBL-CDS" id="AAB71632"/>
    </conflict>
</comment>
<accession>P51580</accession>
<accession>O14806</accession>
<accession>O15423</accession>
<accession>O15424</accession>
<accession>O15425</accession>
<accession>O15426</accession>
<accession>O15515</accession>
<accession>O15548</accession>
<accession>O43213</accession>
<accession>Q5VUK6</accession>
<accession>Q9UBE6</accession>
<accession>Q9UBT8</accession>
<accession>Q9UE62</accession>
<reference key="1">
    <citation type="journal article" date="1993" name="Mol. Pharmacol.">
        <title>Human thiopurine methyltransferase: molecular cloning and expression of T84 colon carcinoma cell cDNA.</title>
        <authorList>
            <person name="Honchel R."/>
            <person name="Aksoy I.A."/>
            <person name="Szumlanski C."/>
            <person name="Wood T.C."/>
            <person name="Otterness D.M."/>
            <person name="Wieben E.D."/>
            <person name="Weinshilboum R.M."/>
        </authorList>
    </citation>
    <scope>NUCLEOTIDE SEQUENCE [MRNA]</scope>
    <scope>PARTIAL PROTEIN SEQUENCE</scope>
    <source>
        <tissue>Kidney</tissue>
    </source>
</reference>
<reference key="2">
    <citation type="journal article" date="1995" name="Drug Metab. Dispos.">
        <title>Thiopurine methyltransferase pharmacogenetics. Cloning of human liver cDNA and a processed pseudogene on human chromosome 18q21.1.</title>
        <authorList>
            <person name="Lee D."/>
            <person name="Szumlanski C.L."/>
            <person name="Houtman J."/>
            <person name="Honchel R."/>
            <person name="Rojas K."/>
            <person name="Overhauser J."/>
            <person name="Weiben E.D."/>
            <person name="Weinshilboum R.M."/>
        </authorList>
    </citation>
    <scope>NUCLEOTIDE SEQUENCE [MRNA]</scope>
</reference>
<reference key="3">
    <citation type="journal article" date="1996" name="DNA Cell Biol.">
        <title>Thiopurine methyltransferase pharmacogenetics: human gene cloning and characterization of a common polymorphism.</title>
        <authorList>
            <person name="Szumlanski C."/>
            <person name="Otterness D."/>
            <person name="Her C."/>
            <person name="Lee D."/>
            <person name="Brandriff B."/>
            <person name="Kelsell D."/>
            <person name="Spurr N."/>
            <person name="Lennard L."/>
            <person name="Wieben E."/>
            <person name="Weinshilboum R.M."/>
        </authorList>
    </citation>
    <scope>NUCLEOTIDE SEQUENCE [GENOMIC DNA]</scope>
    <scope>VARIANTS THR-154 AND CYS-240</scope>
</reference>
<reference key="4">
    <citation type="journal article" date="1997" name="Pharm. Res.">
        <title>Promoter and intronic sequences of the human thiopurine S-methyltransferase (TPMT) gene isolated from a human PAC1 genomic library.</title>
        <authorList>
            <person name="Krynetski E.Y."/>
            <person name="Fessing M.Y."/>
            <person name="Yates C.R."/>
            <person name="Sun D."/>
            <person name="Schuetz J.D."/>
            <person name="Evans W.E."/>
        </authorList>
    </citation>
    <scope>NUCLEOTIDE SEQUENCE [GENOMIC DNA]</scope>
</reference>
<reference key="5">
    <citation type="journal article" date="1997" name="Clin. Pharmacol. Ther.">
        <title>Human thiopurine methyltransferase pharmacogenetics: gene sequence polymorphisms.</title>
        <authorList>
            <person name="Otterness D."/>
            <person name="Szumlanski C."/>
            <person name="Lennard L."/>
            <person name="Klemetsdal B."/>
            <person name="Aarbakke J."/>
            <person name="Park-Hah J.O."/>
            <person name="Iven H."/>
            <person name="Schmiegelow K."/>
            <person name="Branum E."/>
            <person name="O'Brien J."/>
            <person name="Weinshilboum R.M."/>
        </authorList>
    </citation>
    <scope>NUCLEOTIDE SEQUENCE [GENOMIC DNA]</scope>
    <scope>VARIANTS SER-49; THR-154; PHE-180 AND CYS-240</scope>
</reference>
<reference key="6">
    <citation type="submission" date="2000-06" db="EMBL/GenBank/DDBJ databases">
        <title>Genomic structure of thiopurine S-methyltransferase gene.</title>
        <authorList>
            <person name="Nakamura Y."/>
        </authorList>
    </citation>
    <scope>NUCLEOTIDE SEQUENCE [GENOMIC DNA]</scope>
</reference>
<reference key="7">
    <citation type="journal article" date="2003" name="Nature">
        <title>The DNA sequence and analysis of human chromosome 6.</title>
        <authorList>
            <person name="Mungall A.J."/>
            <person name="Palmer S.A."/>
            <person name="Sims S.K."/>
            <person name="Edwards C.A."/>
            <person name="Ashurst J.L."/>
            <person name="Wilming L."/>
            <person name="Jones M.C."/>
            <person name="Horton R."/>
            <person name="Hunt S.E."/>
            <person name="Scott C.E."/>
            <person name="Gilbert J.G.R."/>
            <person name="Clamp M.E."/>
            <person name="Bethel G."/>
            <person name="Milne S."/>
            <person name="Ainscough R."/>
            <person name="Almeida J.P."/>
            <person name="Ambrose K.D."/>
            <person name="Andrews T.D."/>
            <person name="Ashwell R.I.S."/>
            <person name="Babbage A.K."/>
            <person name="Bagguley C.L."/>
            <person name="Bailey J."/>
            <person name="Banerjee R."/>
            <person name="Barker D.J."/>
            <person name="Barlow K.F."/>
            <person name="Bates K."/>
            <person name="Beare D.M."/>
            <person name="Beasley H."/>
            <person name="Beasley O."/>
            <person name="Bird C.P."/>
            <person name="Blakey S.E."/>
            <person name="Bray-Allen S."/>
            <person name="Brook J."/>
            <person name="Brown A.J."/>
            <person name="Brown J.Y."/>
            <person name="Burford D.C."/>
            <person name="Burrill W."/>
            <person name="Burton J."/>
            <person name="Carder C."/>
            <person name="Carter N.P."/>
            <person name="Chapman J.C."/>
            <person name="Clark S.Y."/>
            <person name="Clark G."/>
            <person name="Clee C.M."/>
            <person name="Clegg S."/>
            <person name="Cobley V."/>
            <person name="Collier R.E."/>
            <person name="Collins J.E."/>
            <person name="Colman L.K."/>
            <person name="Corby N.R."/>
            <person name="Coville G.J."/>
            <person name="Culley K.M."/>
            <person name="Dhami P."/>
            <person name="Davies J."/>
            <person name="Dunn M."/>
            <person name="Earthrowl M.E."/>
            <person name="Ellington A.E."/>
            <person name="Evans K.A."/>
            <person name="Faulkner L."/>
            <person name="Francis M.D."/>
            <person name="Frankish A."/>
            <person name="Frankland J."/>
            <person name="French L."/>
            <person name="Garner P."/>
            <person name="Garnett J."/>
            <person name="Ghori M.J."/>
            <person name="Gilby L.M."/>
            <person name="Gillson C.J."/>
            <person name="Glithero R.J."/>
            <person name="Grafham D.V."/>
            <person name="Grant M."/>
            <person name="Gribble S."/>
            <person name="Griffiths C."/>
            <person name="Griffiths M.N.D."/>
            <person name="Hall R."/>
            <person name="Halls K.S."/>
            <person name="Hammond S."/>
            <person name="Harley J.L."/>
            <person name="Hart E.A."/>
            <person name="Heath P.D."/>
            <person name="Heathcott R."/>
            <person name="Holmes S.J."/>
            <person name="Howden P.J."/>
            <person name="Howe K.L."/>
            <person name="Howell G.R."/>
            <person name="Huckle E."/>
            <person name="Humphray S.J."/>
            <person name="Humphries M.D."/>
            <person name="Hunt A.R."/>
            <person name="Johnson C.M."/>
            <person name="Joy A.A."/>
            <person name="Kay M."/>
            <person name="Keenan S.J."/>
            <person name="Kimberley A.M."/>
            <person name="King A."/>
            <person name="Laird G.K."/>
            <person name="Langford C."/>
            <person name="Lawlor S."/>
            <person name="Leongamornlert D.A."/>
            <person name="Leversha M."/>
            <person name="Lloyd C.R."/>
            <person name="Lloyd D.M."/>
            <person name="Loveland J.E."/>
            <person name="Lovell J."/>
            <person name="Martin S."/>
            <person name="Mashreghi-Mohammadi M."/>
            <person name="Maslen G.L."/>
            <person name="Matthews L."/>
            <person name="McCann O.T."/>
            <person name="McLaren S.J."/>
            <person name="McLay K."/>
            <person name="McMurray A."/>
            <person name="Moore M.J.F."/>
            <person name="Mullikin J.C."/>
            <person name="Niblett D."/>
            <person name="Nickerson T."/>
            <person name="Novik K.L."/>
            <person name="Oliver K."/>
            <person name="Overton-Larty E.K."/>
            <person name="Parker A."/>
            <person name="Patel R."/>
            <person name="Pearce A.V."/>
            <person name="Peck A.I."/>
            <person name="Phillimore B.J.C.T."/>
            <person name="Phillips S."/>
            <person name="Plumb R.W."/>
            <person name="Porter K.M."/>
            <person name="Ramsey Y."/>
            <person name="Ranby S.A."/>
            <person name="Rice C.M."/>
            <person name="Ross M.T."/>
            <person name="Searle S.M."/>
            <person name="Sehra H.K."/>
            <person name="Sheridan E."/>
            <person name="Skuce C.D."/>
            <person name="Smith S."/>
            <person name="Smith M."/>
            <person name="Spraggon L."/>
            <person name="Squares S.L."/>
            <person name="Steward C.A."/>
            <person name="Sycamore N."/>
            <person name="Tamlyn-Hall G."/>
            <person name="Tester J."/>
            <person name="Theaker A.J."/>
            <person name="Thomas D.W."/>
            <person name="Thorpe A."/>
            <person name="Tracey A."/>
            <person name="Tromans A."/>
            <person name="Tubby B."/>
            <person name="Wall M."/>
            <person name="Wallis J.M."/>
            <person name="West A.P."/>
            <person name="White S.S."/>
            <person name="Whitehead S.L."/>
            <person name="Whittaker H."/>
            <person name="Wild A."/>
            <person name="Willey D.J."/>
            <person name="Wilmer T.E."/>
            <person name="Wood J.M."/>
            <person name="Wray P.W."/>
            <person name="Wyatt J.C."/>
            <person name="Young L."/>
            <person name="Younger R.M."/>
            <person name="Bentley D.R."/>
            <person name="Coulson A."/>
            <person name="Durbin R.M."/>
            <person name="Hubbard T."/>
            <person name="Sulston J.E."/>
            <person name="Dunham I."/>
            <person name="Rogers J."/>
            <person name="Beck S."/>
        </authorList>
    </citation>
    <scope>NUCLEOTIDE SEQUENCE [LARGE SCALE GENOMIC DNA]</scope>
</reference>
<reference key="8">
    <citation type="journal article" date="2004" name="Genome Res.">
        <title>The status, quality, and expansion of the NIH full-length cDNA project: the Mammalian Gene Collection (MGC).</title>
        <authorList>
            <consortium name="The MGC Project Team"/>
        </authorList>
    </citation>
    <scope>NUCLEOTIDE SEQUENCE [LARGE SCALE MRNA]</scope>
    <source>
        <tissue>Bone marrow</tissue>
    </source>
</reference>
<reference key="9">
    <citation type="journal article" date="1998" name="Hum. Mutat.">
        <title>Detection of known and new mutations in the thiopurine S-methyltransferase gene by single-strand conformation polymorphism analysis.</title>
        <authorList>
            <person name="Spire-Vayron de la Moureyre C."/>
            <person name="Debuysere H."/>
            <person name="Sabbagh N."/>
            <person name="Marez D."/>
            <person name="Vinner E."/>
            <person name="Chevalier E.D."/>
            <person name="Lo-Guidice J.-M."/>
            <person name="Broly F."/>
        </authorList>
    </citation>
    <scope>NUCLEOTIDE SEQUENCE [GENOMIC DNA] OF 210-245</scope>
    <scope>VARIANT GLN-227</scope>
</reference>
<reference key="10">
    <citation type="journal article" date="1978" name="Clin. Chim. Acta">
        <title>Human erythrocyte thiopurine methyltransferase: radiochemical microassay and biochemical properties.</title>
        <authorList>
            <person name="Weinshilboum R.M."/>
            <person name="Raymond F.A."/>
            <person name="Pazmino P.A."/>
        </authorList>
    </citation>
    <scope>FUNCTION</scope>
    <scope>CATALYTIC ACTIVITY</scope>
    <scope>BIOPHYSICOCHEMICAL PROPERTIES</scope>
    <source>
        <tissue>Blood</tissue>
        <tissue>Erythrocyte</tissue>
        <tissue>Kidney</tissue>
    </source>
</reference>
<reference key="11">
    <citation type="journal article" date="2008" name="Biochemistry">
        <title>Structural basis of substrate recognition in thiopurine S-methyltransferase.</title>
        <authorList>
            <person name="Peng Y."/>
            <person name="Feng Q."/>
            <person name="Wilk D."/>
            <person name="Adjei A.A."/>
            <person name="Salavaggione O.E."/>
            <person name="Weinshilboum R.M."/>
            <person name="Yee V.C."/>
        </authorList>
    </citation>
    <scope>CATALYTIC ACTIVITY</scope>
    <scope>FUNCTION</scope>
    <scope>BIOPHYSICOCHEMICAL PROPERTIES</scope>
    <scope>MUTAGENESIS OF ARG-152</scope>
</reference>
<reference key="12">
    <citation type="journal article" date="2008" name="Proc. Natl. Acad. Sci. U.S.A.">
        <title>A quantitative atlas of mitotic phosphorylation.</title>
        <authorList>
            <person name="Dephoure N."/>
            <person name="Zhou C."/>
            <person name="Villen J."/>
            <person name="Beausoleil S.A."/>
            <person name="Bakalarski C.E."/>
            <person name="Elledge S.J."/>
            <person name="Gygi S.P."/>
        </authorList>
    </citation>
    <scope>PHOSPHORYLATION [LARGE SCALE ANALYSIS] AT SER-14</scope>
    <scope>IDENTIFICATION BY MASS SPECTROMETRY [LARGE SCALE ANALYSIS]</scope>
    <source>
        <tissue>Cervix carcinoma</tissue>
    </source>
</reference>
<reference key="13">
    <citation type="journal article" date="2008" name="Proteomics">
        <title>Large-scale phosphoproteome analysis of human liver tissue by enrichment and fractionation of phosphopeptides with strong anion exchange chromatography.</title>
        <authorList>
            <person name="Han G."/>
            <person name="Ye M."/>
            <person name="Zhou H."/>
            <person name="Jiang X."/>
            <person name="Feng S."/>
            <person name="Jiang X."/>
            <person name="Tian R."/>
            <person name="Wan D."/>
            <person name="Zou H."/>
            <person name="Gu J."/>
        </authorList>
    </citation>
    <scope>IDENTIFICATION BY MASS SPECTROMETRY [LARGE SCALE ANALYSIS]</scope>
    <source>
        <tissue>Liver</tissue>
    </source>
</reference>
<reference key="14">
    <citation type="journal article" date="2009" name="Sci. Signal.">
        <title>Quantitative phosphoproteomic analysis of T cell receptor signaling reveals system-wide modulation of protein-protein interactions.</title>
        <authorList>
            <person name="Mayya V."/>
            <person name="Lundgren D.H."/>
            <person name="Hwang S.-I."/>
            <person name="Rezaul K."/>
            <person name="Wu L."/>
            <person name="Eng J.K."/>
            <person name="Rodionov V."/>
            <person name="Han D.K."/>
        </authorList>
    </citation>
    <scope>PHOSPHORYLATION [LARGE SCALE ANALYSIS] AT SER-14</scope>
    <scope>IDENTIFICATION BY MASS SPECTROMETRY [LARGE SCALE ANALYSIS]</scope>
    <source>
        <tissue>Leukemic T-cell</tissue>
    </source>
</reference>
<reference key="15">
    <citation type="journal article" date="2009" name="Science">
        <title>Lysine acetylation targets protein complexes and co-regulates major cellular functions.</title>
        <authorList>
            <person name="Choudhary C."/>
            <person name="Kumar C."/>
            <person name="Gnad F."/>
            <person name="Nielsen M.L."/>
            <person name="Rehman M."/>
            <person name="Walther T.C."/>
            <person name="Olsen J.V."/>
            <person name="Mann M."/>
        </authorList>
    </citation>
    <scope>ACETYLATION [LARGE SCALE ANALYSIS] AT LYS-58</scope>
    <scope>IDENTIFICATION BY MASS SPECTROMETRY [LARGE SCALE ANALYSIS]</scope>
</reference>
<reference key="16">
    <citation type="journal article" date="2011" name="BMC Syst. Biol.">
        <title>Initial characterization of the human central proteome.</title>
        <authorList>
            <person name="Burkard T.R."/>
            <person name="Planyavsky M."/>
            <person name="Kaupe I."/>
            <person name="Breitwieser F.P."/>
            <person name="Buerckstuemmer T."/>
            <person name="Bennett K.L."/>
            <person name="Superti-Furga G."/>
            <person name="Colinge J."/>
        </authorList>
    </citation>
    <scope>IDENTIFICATION BY MASS SPECTROMETRY [LARGE SCALE ANALYSIS]</scope>
</reference>
<reference key="17">
    <citation type="journal article" date="2013" name="J. Proteome Res.">
        <title>Toward a comprehensive characterization of a human cancer cell phosphoproteome.</title>
        <authorList>
            <person name="Zhou H."/>
            <person name="Di Palma S."/>
            <person name="Preisinger C."/>
            <person name="Peng M."/>
            <person name="Polat A.N."/>
            <person name="Heck A.J."/>
            <person name="Mohammed S."/>
        </authorList>
    </citation>
    <scope>IDENTIFICATION BY MASS SPECTROMETRY [LARGE SCALE ANALYSIS]</scope>
    <source>
        <tissue>Cervix carcinoma</tissue>
        <tissue>Erythroleukemia</tissue>
    </source>
</reference>
<reference key="18">
    <citation type="journal article" date="2014" name="J. Proteomics">
        <title>An enzyme assisted RP-RPLC approach for in-depth analysis of human liver phosphoproteome.</title>
        <authorList>
            <person name="Bian Y."/>
            <person name="Song C."/>
            <person name="Cheng K."/>
            <person name="Dong M."/>
            <person name="Wang F."/>
            <person name="Huang J."/>
            <person name="Sun D."/>
            <person name="Wang L."/>
            <person name="Ye M."/>
            <person name="Zou H."/>
        </authorList>
    </citation>
    <scope>PHOSPHORYLATION [LARGE SCALE ANALYSIS] AT SER-14</scope>
    <scope>IDENTIFICATION BY MASS SPECTROMETRY [LARGE SCALE ANALYSIS]</scope>
    <source>
        <tissue>Liver</tissue>
    </source>
</reference>
<reference key="19">
    <citation type="journal article" date="2007" name="Proteins">
        <title>Structural basis of allele variation of human thiopurine-S-methyltransferase.</title>
        <authorList>
            <person name="Wu H."/>
            <person name="Horton J.R."/>
            <person name="Battaile K."/>
            <person name="Allali-Hassani A."/>
            <person name="Martin F."/>
            <person name="Zeng H."/>
            <person name="Loppnau P."/>
            <person name="Vedadi M."/>
            <person name="Bochkarev A."/>
            <person name="Plotnikov A.N."/>
            <person name="Cheng X."/>
        </authorList>
    </citation>
    <scope>X-RAY CRYSTALLOGRAPHY (1.58 ANGSTROMS) OF 16-245 IN COMPLEX WITH S-ADENOSYL-L-HOMOCYSTEINE</scope>
    <scope>SUBUNIT</scope>
    <scope>CHARACTERIZATION OF VARIANTS THR-154 AND CYS-240</scope>
</reference>
<reference key="20">
    <citation type="journal article" date="1995" name="Proc. Natl. Acad. Sci. U.S.A.">
        <title>A single point mutation leading to loss of catalytic activity in human thiopurine S-methyltransferase.</title>
        <authorList>
            <person name="Krynetski E.Y."/>
            <person name="Schuetz J.D."/>
            <person name="Galpin A.J."/>
            <person name="Pui C.-H."/>
            <person name="Relling M.V."/>
            <person name="Evans W.E."/>
        </authorList>
    </citation>
    <scope>VARIANT PRO-80</scope>
</reference>
<reference key="21">
    <citation type="journal article" date="1996" name="Am. J. Hum. Genet.">
        <title>Thiopurine S-methyltransferase deficiency: two nucleotide transitions define the most prevalent mutant allele associated with loss of catalytic activity in Caucasians.</title>
        <authorList>
            <person name="Tai H.-L."/>
            <person name="Krynetski E.Y."/>
            <person name="Yates C.R."/>
            <person name="Loennechen T."/>
            <person name="Fessing M.Y."/>
            <person name="Krynetskaia N.F."/>
            <person name="Evans W.E."/>
        </authorList>
    </citation>
    <scope>VARIANTS THR-154 AND CYS-240</scope>
</reference>
<reference key="22">
    <citation type="journal article" date="1997" name="Arthritis Rheum.">
        <title>Azathioprine-induced severe pancytopenia due to a homozygous two-point mutation of the thiopurine methyltransferase gene in a patient with juvenile HLA-B27-associated spondylarthritis.</title>
        <authorList>
            <person name="Leipold G."/>
            <person name="Schuetz E."/>
            <person name="Haas J.P."/>
            <person name="Oellerich M."/>
        </authorList>
    </citation>
    <scope>VARIANTS THR-154 AND CYS-240</scope>
</reference>
<reference key="23">
    <citation type="journal article" date="1997" name="Proc. Natl. Acad. Sci. U.S.A.">
        <title>Enhanced proteolysis of thiopurine S-methyltransferase (TPMT) encoded by mutant alleles in humans (TPMT*3A, TPMT*2): mechanisms for the genetic polymorphism of TPMT activity.</title>
        <authorList>
            <person name="Tai H.-L."/>
            <person name="Krynetski E.Y."/>
            <person name="Schuetz E.G."/>
            <person name="Yanishevski Y."/>
            <person name="Evans W.E."/>
        </authorList>
    </citation>
    <scope>CHARACTERIZATION OF VARIANTS PRO-80 AND THR-154</scope>
    <scope>MECHANISM FOR THE GENETIC POLYMORPHISM OF TPMT ACTIVITY</scope>
</reference>
<reference key="24">
    <citation type="journal article" date="1999" name="Hum. Mol. Genet.">
        <title>Thiopurine methyltransferase alleles in British and Ghanaian populations.</title>
        <authorList>
            <person name="Ameyaw M.-M."/>
            <person name="Collie-Duguid E.S.R."/>
            <person name="Powrie R.H."/>
            <person name="Ofori-Adjei D."/>
            <person name="McLeod H.L."/>
        </authorList>
    </citation>
    <scope>VARIANTS PRO-80; THR-154 AND CYS-240</scope>
</reference>
<reference key="25">
    <citation type="journal article" date="1999" name="Hum. Mol. Genet.">
        <title>Polymorphism of the thiopurine S-methyltransferase gene in African-Americans.</title>
        <authorList>
            <person name="Hon Y.Y."/>
            <person name="Fessing M.Y."/>
            <person name="Pui C.-H."/>
            <person name="Relling M.V."/>
            <person name="Krynetski E.Y."/>
            <person name="Evans W.E."/>
        </authorList>
    </citation>
    <scope>VARIANT HIS-215</scope>
</reference>
<reference key="26">
    <citation type="journal article" date="1999" name="Pharmacogenetics">
        <title>The frequency and distribution of thiopurine methyltransferase alleles in Caucasian and Asian populations.</title>
        <authorList>
            <person name="Collie-Duguid E.S.R."/>
            <person name="Pritchard S.C."/>
            <person name="Powrie R.H."/>
            <person name="Sludden J."/>
            <person name="Collier D.A."/>
            <person name="Li T."/>
            <person name="McLeod H.L."/>
        </authorList>
    </citation>
    <scope>VARIANTS PRO-80; THR-154 AND CYS-240</scope>
    <scope>FREQUENCY AND DISTRIBUTION OF ALLELES</scope>
</reference>
<reference key="27">
    <citation type="journal article" date="2000" name="Mutat. Res.">
        <title>Genetic analysis of thiopurine methyltransferase polymorphism in a Japanese population.</title>
        <authorList>
            <person name="Hiratsuka M."/>
            <person name="Inoue T."/>
            <person name="Omori F."/>
            <person name="Agatsuma Y."/>
            <person name="Mizugaki M."/>
        </authorList>
    </citation>
    <scope>VARIANTS PRO-80; THR-154 AND CYS-240</scope>
    <scope>FREQUENCY AND DISTRIBUTION OF ALLELES</scope>
</reference>
<reference key="28">
    <citation type="journal article" date="2005" name="Pharmacogenet. Genomics">
        <title>Thiopurine S-methyltransferase pharmacogenetics: variant allele functional and comparative genomics.</title>
        <authorList>
            <person name="Salavaggione O.E."/>
            <person name="Wang L."/>
            <person name="Wiepert M."/>
            <person name="Yee V.C."/>
            <person name="Weinshilboum R.M."/>
        </authorList>
    </citation>
    <scope>VARIANTS SER-49; PRO-80; THR-154; PHE-180; HIS-215; GLN-227 AND CYS-240</scope>
    <scope>CHARACTERIZATION OF VARIANTS SER-49; PRO-80; THR-154; PHE-180; HIS-215; GLN-227 AND CYS-240</scope>
</reference>
<reference key="29">
    <citation type="journal article" date="2005" name="Transpl. Int.">
        <title>Severe azathioprine-induced myelotoxicity in a kidney transplant patient with thiopurine S-methyltransferase-deficient genotype (TPMT*3A/*3C).</title>
        <authorList>
            <person name="Kurzawski M."/>
            <person name="Dziewanowski K."/>
            <person name="Ciechanowski K."/>
            <person name="Drozdzik M."/>
        </authorList>
    </citation>
    <scope>VARIANTS THR-154 AND CYS-240</scope>
</reference>
<reference key="30">
    <citation type="journal article" date="2006" name="J. Clin. Pharm. Ther.">
        <title>Molecular analysis of thiopurine S-methyltransferase alleles in Taiwan aborigines and Taiwanese.</title>
        <authorList>
            <person name="Lu H.-F."/>
            <person name="Shih M.-C."/>
            <person name="Chang Y.-S."/>
            <person name="Chang J.-Y."/>
            <person name="Ko Y.-C."/>
            <person name="Chang S.-J."/>
            <person name="Chang J.-G."/>
        </authorList>
    </citation>
    <scope>VARIANTS PRO-80; THR-154 AND CYS-240</scope>
    <scope>FREQUENCY AND DISTRIBUTION OF ALLELES</scope>
</reference>
<reference key="31">
    <citation type="journal article" date="2006" name="J. Clin. Pharm. Ther.">
        <title>Frequency of the thiopurine S-methyltransferase alleles in the ancient genetic population isolate of Sardinia.</title>
        <authorList>
            <person name="Rossino R."/>
            <person name="Vincis C."/>
            <person name="Alves S."/>
            <person name="Prata M.J."/>
            <person name="Macis M.D."/>
            <person name="Nucaro A.L."/>
            <person name="Schirru E."/>
            <person name="Congia M."/>
        </authorList>
    </citation>
    <scope>VARIANTS PRO-80; THR-154 AND CYS-240</scope>
    <scope>FREQUENCY AND DISTRIBUTION OF ALLELES</scope>
</reference>
<protein>
    <recommendedName>
        <fullName evidence="20">Thiopurine S-methyltransferase</fullName>
        <ecNumber evidence="9 10">2.1.1.67</ecNumber>
    </recommendedName>
    <alternativeName>
        <fullName evidence="21">Thiopurine methyltransferase</fullName>
    </alternativeName>
</protein>
<gene>
    <name type="primary">TPMT</name>
</gene>
<evidence type="ECO:0000250" key="1"/>
<evidence type="ECO:0000269" key="2">
    <source>
    </source>
</evidence>
<evidence type="ECO:0000269" key="3">
    <source>
    </source>
</evidence>
<evidence type="ECO:0000269" key="4">
    <source>
    </source>
</evidence>
<evidence type="ECO:0000269" key="5">
    <source>
    </source>
</evidence>
<evidence type="ECO:0000269" key="6">
    <source>
    </source>
</evidence>
<evidence type="ECO:0000269" key="7">
    <source>
    </source>
</evidence>
<evidence type="ECO:0000269" key="8">
    <source>
    </source>
</evidence>
<evidence type="ECO:0000269" key="9">
    <source>
    </source>
</evidence>
<evidence type="ECO:0000269" key="10">
    <source>
    </source>
</evidence>
<evidence type="ECO:0000269" key="11">
    <source>
    </source>
</evidence>
<evidence type="ECO:0000269" key="12">
    <source>
    </source>
</evidence>
<evidence type="ECO:0000269" key="13">
    <source>
    </source>
</evidence>
<evidence type="ECO:0000269" key="14">
    <source>
    </source>
</evidence>
<evidence type="ECO:0000269" key="15">
    <source>
    </source>
</evidence>
<evidence type="ECO:0000269" key="16">
    <source>
    </source>
</evidence>
<evidence type="ECO:0000269" key="17">
    <source>
    </source>
</evidence>
<evidence type="ECO:0000269" key="18">
    <source>
    </source>
</evidence>
<evidence type="ECO:0000269" key="19">
    <source>
    </source>
</evidence>
<evidence type="ECO:0000303" key="20">
    <source>
    </source>
</evidence>
<evidence type="ECO:0000303" key="21">
    <source>
    </source>
</evidence>
<evidence type="ECO:0000305" key="22"/>
<evidence type="ECO:0007744" key="23">
    <source>
    </source>
</evidence>
<evidence type="ECO:0007744" key="24">
    <source>
    </source>
</evidence>
<evidence type="ECO:0007744" key="25">
    <source>
    </source>
</evidence>
<evidence type="ECO:0007744" key="26">
    <source>
    </source>
</evidence>
<evidence type="ECO:0007829" key="27">
    <source>
        <dbReference type="PDB" id="2BZG"/>
    </source>
</evidence>
<keyword id="KW-0002">3D-structure</keyword>
<keyword id="KW-0007">Acetylation</keyword>
<keyword id="KW-0963">Cytoplasm</keyword>
<keyword id="KW-0903">Direct protein sequencing</keyword>
<keyword id="KW-0489">Methyltransferase</keyword>
<keyword id="KW-0597">Phosphoprotein</keyword>
<keyword id="KW-1267">Proteomics identification</keyword>
<keyword id="KW-1185">Reference proteome</keyword>
<keyword id="KW-0949">S-adenosyl-L-methionine</keyword>
<keyword id="KW-0808">Transferase</keyword>
<feature type="chain" id="PRO_0000220102" description="Thiopurine S-methyltransferase">
    <location>
        <begin position="1"/>
        <end position="245"/>
    </location>
</feature>
<feature type="binding site">
    <location>
        <begin position="29"/>
        <end position="40"/>
    </location>
    <ligand>
        <name>S-adenosyl-L-methionine</name>
        <dbReference type="ChEBI" id="CHEBI:59789"/>
    </ligand>
</feature>
<feature type="binding site" evidence="1">
    <location>
        <position position="40"/>
    </location>
    <ligand>
        <name>substrate</name>
    </ligand>
</feature>
<feature type="binding site">
    <location>
        <position position="69"/>
    </location>
    <ligand>
        <name>S-adenosyl-L-methionine</name>
        <dbReference type="ChEBI" id="CHEBI:59789"/>
    </ligand>
</feature>
<feature type="binding site">
    <location>
        <position position="90"/>
    </location>
    <ligand>
        <name>S-adenosyl-L-methionine</name>
        <dbReference type="ChEBI" id="CHEBI:59789"/>
    </ligand>
</feature>
<feature type="binding site">
    <location>
        <begin position="134"/>
        <end position="135"/>
    </location>
    <ligand>
        <name>S-adenosyl-L-methionine</name>
        <dbReference type="ChEBI" id="CHEBI:59789"/>
    </ligand>
</feature>
<feature type="binding site">
    <location>
        <position position="152"/>
    </location>
    <ligand>
        <name>S-adenosyl-L-methionine</name>
        <dbReference type="ChEBI" id="CHEBI:59789"/>
    </ligand>
</feature>
<feature type="modified residue" description="Phosphoserine" evidence="23 25 26">
    <location>
        <position position="14"/>
    </location>
</feature>
<feature type="modified residue" description="N6-acetyllysine" evidence="24">
    <location>
        <position position="58"/>
    </location>
</feature>
<feature type="sequence variant" id="VAR_005636" description="Allele TPMT*5; has very low activity when expressed in a heterologous system; dbSNP:rs72552740." evidence="5 15">
    <original>L</original>
    <variation>S</variation>
    <location>
        <position position="49"/>
    </location>
</feature>
<feature type="sequence variant" id="VAR_005637" description="Allele TPMT*2; TPMT*2 allele frequency is 0.5%; seems to be restricted to the Caucasian population; 100-fold reduction in activity; protein shows enhanced degradation; dbSNP:rs1800462." evidence="2 3 5 6 7 11 14 18">
    <original>A</original>
    <variation>P</variation>
    <location>
        <position position="80"/>
    </location>
</feature>
<feature type="sequence variant" id="VAR_005638" description="Allele TPMT*3A and allele TPMT*3B; very low activity; protein shows enhanced degradation leading to strongly reduced protein levels; dbSNP:rs1800460." evidence="2 3 4 5 6 7 8 12 13 14 15 16 18">
    <original>A</original>
    <variation>T</variation>
    <location>
        <position position="154"/>
    </location>
</feature>
<feature type="sequence variant" id="VAR_052368" description="In dbSNP:rs6921269.">
    <original>Q</original>
    <variation>H</variation>
    <location>
        <position position="179"/>
    </location>
</feature>
<feature type="sequence variant" id="VAR_005639" description="Allele TPMT*6; reduced activity; dbSNP:rs75543815." evidence="5 15">
    <original>Y</original>
    <variation>F</variation>
    <location>
        <position position="180"/>
    </location>
</feature>
<feature type="sequence variant" id="VAR_008715" description="Allele TPMT*8; intermediate activity; dbSNP:rs56161402." evidence="5 19">
    <original>R</original>
    <variation>H</variation>
    <location>
        <position position="215"/>
    </location>
</feature>
<feature type="sequence variant" id="VAR_005640" description="Allele TPMT*7; reduced activity; dbSNP:rs72552736." evidence="5 17">
    <original>H</original>
    <variation>Q</variation>
    <location>
        <position position="227"/>
    </location>
</feature>
<feature type="sequence variant" id="VAR_005641" description="Allele TPMT*3B and allele TPMT*3C; reduced activity; protein shows enhanced degradation; dbSNP:rs1142345." evidence="2 3 4 5 6 7 8 12 13 15 16 18">
    <original>Y</original>
    <variation>C</variation>
    <location>
        <position position="240"/>
    </location>
</feature>
<feature type="mutagenesis site" description="Decreases affinity for 6-mercaptopurine. Slightly decreases catalytic activity." evidence="9">
    <original>R</original>
    <variation>E</variation>
    <location>
        <position position="152"/>
    </location>
</feature>
<feature type="turn" evidence="27">
    <location>
        <begin position="18"/>
        <end position="21"/>
    </location>
</feature>
<feature type="helix" evidence="27">
    <location>
        <begin position="26"/>
        <end position="35"/>
    </location>
</feature>
<feature type="helix" evidence="27">
    <location>
        <begin position="47"/>
        <end position="57"/>
    </location>
</feature>
<feature type="strand" evidence="27">
    <location>
        <begin position="64"/>
        <end position="67"/>
    </location>
</feature>
<feature type="helix" evidence="27">
    <location>
        <begin position="75"/>
        <end position="81"/>
    </location>
</feature>
<feature type="strand" evidence="27">
    <location>
        <begin position="85"/>
        <end position="89"/>
    </location>
</feature>
<feature type="helix" evidence="27">
    <location>
        <begin position="93"/>
        <end position="102"/>
    </location>
</feature>
<feature type="strand" evidence="27">
    <location>
        <begin position="107"/>
        <end position="111"/>
    </location>
</feature>
<feature type="strand" evidence="27">
    <location>
        <begin position="119"/>
        <end position="123"/>
    </location>
</feature>
<feature type="strand" evidence="27">
    <location>
        <begin position="126"/>
        <end position="133"/>
    </location>
</feature>
<feature type="helix" evidence="27">
    <location>
        <begin position="135"/>
        <end position="140"/>
    </location>
</feature>
<feature type="strand" evidence="27">
    <location>
        <begin position="146"/>
        <end position="154"/>
    </location>
</feature>
<feature type="turn" evidence="27">
    <location>
        <begin position="155"/>
        <end position="157"/>
    </location>
</feature>
<feature type="helix" evidence="27">
    <location>
        <begin position="160"/>
        <end position="162"/>
    </location>
</feature>
<feature type="helix" evidence="27">
    <location>
        <begin position="163"/>
        <end position="172"/>
    </location>
</feature>
<feature type="strand" evidence="27">
    <location>
        <begin position="174"/>
        <end position="186"/>
    </location>
</feature>
<feature type="turn" evidence="27">
    <location>
        <begin position="189"/>
        <end position="191"/>
    </location>
</feature>
<feature type="helix" evidence="27">
    <location>
        <begin position="201"/>
        <end position="208"/>
    </location>
</feature>
<feature type="turn" evidence="27">
    <location>
        <begin position="209"/>
        <end position="211"/>
    </location>
</feature>
<feature type="strand" evidence="27">
    <location>
        <begin position="212"/>
        <end position="221"/>
    </location>
</feature>
<feature type="helix" evidence="27">
    <location>
        <begin position="225"/>
        <end position="230"/>
    </location>
</feature>
<feature type="strand" evidence="27">
    <location>
        <begin position="236"/>
        <end position="244"/>
    </location>
</feature>
<dbReference type="EC" id="2.1.1.67" evidence="9 10"/>
<dbReference type="EMBL" id="S62904">
    <property type="protein sequence ID" value="AAB27277.1"/>
    <property type="molecule type" value="mRNA"/>
</dbReference>
<dbReference type="EMBL" id="U12387">
    <property type="protein sequence ID" value="AAC50130.1"/>
    <property type="molecule type" value="mRNA"/>
</dbReference>
<dbReference type="EMBL" id="U30518">
    <property type="protein sequence ID" value="AAC50368.1"/>
    <property type="molecule type" value="Genomic_DNA"/>
</dbReference>
<dbReference type="EMBL" id="U30512">
    <property type="protein sequence ID" value="AAC50368.1"/>
    <property type="status" value="JOINED"/>
    <property type="molecule type" value="Genomic_DNA"/>
</dbReference>
<dbReference type="EMBL" id="U30513">
    <property type="protein sequence ID" value="AAC50368.1"/>
    <property type="status" value="JOINED"/>
    <property type="molecule type" value="Genomic_DNA"/>
</dbReference>
<dbReference type="EMBL" id="U30514">
    <property type="protein sequence ID" value="AAC50368.1"/>
    <property type="status" value="JOINED"/>
    <property type="molecule type" value="Genomic_DNA"/>
</dbReference>
<dbReference type="EMBL" id="U30515">
    <property type="protein sequence ID" value="AAC50368.1"/>
    <property type="status" value="JOINED"/>
    <property type="molecule type" value="Genomic_DNA"/>
</dbReference>
<dbReference type="EMBL" id="U30516">
    <property type="protein sequence ID" value="AAC50368.1"/>
    <property type="status" value="JOINED"/>
    <property type="molecule type" value="Genomic_DNA"/>
</dbReference>
<dbReference type="EMBL" id="U30517">
    <property type="protein sequence ID" value="AAC50368.1"/>
    <property type="status" value="JOINED"/>
    <property type="molecule type" value="Genomic_DNA"/>
</dbReference>
<dbReference type="EMBL" id="AF019369">
    <property type="protein sequence ID" value="AAC51865.1"/>
    <property type="molecule type" value="Genomic_DNA"/>
</dbReference>
<dbReference type="EMBL" id="AF019364">
    <property type="protein sequence ID" value="AAC51865.1"/>
    <property type="status" value="JOINED"/>
    <property type="molecule type" value="Genomic_DNA"/>
</dbReference>
<dbReference type="EMBL" id="AF019365">
    <property type="protein sequence ID" value="AAC51865.1"/>
    <property type="status" value="JOINED"/>
    <property type="molecule type" value="Genomic_DNA"/>
</dbReference>
<dbReference type="EMBL" id="AF019366">
    <property type="protein sequence ID" value="AAC51865.1"/>
    <property type="status" value="JOINED"/>
    <property type="molecule type" value="Genomic_DNA"/>
</dbReference>
<dbReference type="EMBL" id="AF019367">
    <property type="protein sequence ID" value="AAC51865.1"/>
    <property type="status" value="JOINED"/>
    <property type="molecule type" value="Genomic_DNA"/>
</dbReference>
<dbReference type="EMBL" id="AF019368">
    <property type="protein sequence ID" value="AAC51865.1"/>
    <property type="status" value="JOINED"/>
    <property type="molecule type" value="Genomic_DNA"/>
</dbReference>
<dbReference type="EMBL" id="U81562">
    <property type="protein sequence ID" value="AAB71625.1"/>
    <property type="molecule type" value="Genomic_DNA"/>
</dbReference>
<dbReference type="EMBL" id="U81563">
    <property type="protein sequence ID" value="AAB71626.1"/>
    <property type="molecule type" value="Genomic_DNA"/>
</dbReference>
<dbReference type="EMBL" id="U81564">
    <property type="protein sequence ID" value="AAB71627.1"/>
    <property type="molecule type" value="Genomic_DNA"/>
</dbReference>
<dbReference type="EMBL" id="U81565">
    <property type="protein sequence ID" value="AAB71628.1"/>
    <property type="molecule type" value="Genomic_DNA"/>
</dbReference>
<dbReference type="EMBL" id="U81566">
    <property type="protein sequence ID" value="AAB71629.1"/>
    <property type="molecule type" value="Genomic_DNA"/>
</dbReference>
<dbReference type="EMBL" id="U81567">
    <property type="protein sequence ID" value="AAB71630.1"/>
    <property type="molecule type" value="Genomic_DNA"/>
</dbReference>
<dbReference type="EMBL" id="U81568">
    <property type="protein sequence ID" value="AAB71631.1"/>
    <property type="status" value="ALT_INIT"/>
    <property type="molecule type" value="Genomic_DNA"/>
</dbReference>
<dbReference type="EMBL" id="U81569">
    <property type="protein sequence ID" value="AAB71632.1"/>
    <property type="status" value="ALT_INIT"/>
    <property type="molecule type" value="Genomic_DNA"/>
</dbReference>
<dbReference type="EMBL" id="U81570">
    <property type="protein sequence ID" value="AAB71633.1"/>
    <property type="molecule type" value="Genomic_DNA"/>
</dbReference>
<dbReference type="EMBL" id="U81571">
    <property type="protein sequence ID" value="AAB71634.1"/>
    <property type="molecule type" value="Genomic_DNA"/>
</dbReference>
<dbReference type="EMBL" id="U81572">
    <property type="protein sequence ID" value="AAB71635.1"/>
    <property type="molecule type" value="Genomic_DNA"/>
</dbReference>
<dbReference type="EMBL" id="U81573">
    <property type="protein sequence ID" value="AAB71636.1"/>
    <property type="molecule type" value="Genomic_DNA"/>
</dbReference>
<dbReference type="EMBL" id="AB045146">
    <property type="protein sequence ID" value="BAA97037.1"/>
    <property type="molecule type" value="Genomic_DNA"/>
</dbReference>
<dbReference type="EMBL" id="AL589723">
    <property type="status" value="NOT_ANNOTATED_CDS"/>
    <property type="molecule type" value="Genomic_DNA"/>
</dbReference>
<dbReference type="EMBL" id="BC009596">
    <property type="protein sequence ID" value="AAH09596.1"/>
    <property type="molecule type" value="mRNA"/>
</dbReference>
<dbReference type="EMBL" id="AF035426">
    <property type="protein sequence ID" value="AAC32289.1"/>
    <property type="molecule type" value="Genomic_DNA"/>
</dbReference>
<dbReference type="EMBL" id="AF021876">
    <property type="protein sequence ID" value="AAB80746.1"/>
    <property type="molecule type" value="mRNA"/>
</dbReference>
<dbReference type="EMBL" id="AF021877">
    <property type="protein sequence ID" value="AAB80747.1"/>
    <property type="molecule type" value="mRNA"/>
</dbReference>
<dbReference type="CCDS" id="CCDS4543.1"/>
<dbReference type="PIR" id="I57946">
    <property type="entry name" value="I57946"/>
</dbReference>
<dbReference type="RefSeq" id="NP_000358.1">
    <property type="nucleotide sequence ID" value="NM_000367.5"/>
</dbReference>
<dbReference type="RefSeq" id="NP_001333746.1">
    <property type="nucleotide sequence ID" value="NM_001346817.1"/>
</dbReference>
<dbReference type="RefSeq" id="NP_001333747.1">
    <property type="nucleotide sequence ID" value="NM_001346818.1"/>
</dbReference>
<dbReference type="RefSeq" id="XP_047275245.1">
    <property type="nucleotide sequence ID" value="XM_047419289.1"/>
</dbReference>
<dbReference type="RefSeq" id="XP_054212273.1">
    <property type="nucleotide sequence ID" value="XM_054356298.1"/>
</dbReference>
<dbReference type="PDB" id="2BZG">
    <property type="method" value="X-ray"/>
    <property type="resolution" value="1.58 A"/>
    <property type="chains" value="A=16-245"/>
</dbReference>
<dbReference type="PDB" id="2H11">
    <property type="method" value="X-ray"/>
    <property type="resolution" value="1.89 A"/>
    <property type="chains" value="A/B=17-245"/>
</dbReference>
<dbReference type="PDBsum" id="2BZG"/>
<dbReference type="PDBsum" id="2H11"/>
<dbReference type="BMRB" id="P51580"/>
<dbReference type="SMR" id="P51580"/>
<dbReference type="BioGRID" id="113025">
    <property type="interactions" value="13"/>
</dbReference>
<dbReference type="FunCoup" id="P51580">
    <property type="interactions" value="581"/>
</dbReference>
<dbReference type="IntAct" id="P51580">
    <property type="interactions" value="8"/>
</dbReference>
<dbReference type="STRING" id="9606.ENSP00000312304"/>
<dbReference type="BindingDB" id="P51580"/>
<dbReference type="ChEMBL" id="CHEMBL2500"/>
<dbReference type="DrugBank" id="DB00993">
    <property type="generic name" value="Azathioprine"/>
</dbReference>
<dbReference type="DrugBank" id="DB00436">
    <property type="generic name" value="Bendroflumethiazide"/>
</dbReference>
<dbReference type="DrugBank" id="DB01327">
    <property type="generic name" value="Cefazolin"/>
</dbReference>
<dbReference type="DrugBank" id="DB01033">
    <property type="generic name" value="Mercaptopurine"/>
</dbReference>
<dbReference type="DrugBank" id="DB01250">
    <property type="generic name" value="Olsalazine"/>
</dbReference>
<dbReference type="DrugBank" id="DB01021">
    <property type="generic name" value="Trichlormethiazide"/>
</dbReference>
<dbReference type="DrugCentral" id="P51580"/>
<dbReference type="GlyGen" id="P51580">
    <property type="glycosylation" value="1 site, 1 O-linked glycan (1 site)"/>
</dbReference>
<dbReference type="iPTMnet" id="P51580"/>
<dbReference type="PhosphoSitePlus" id="P51580"/>
<dbReference type="BioMuta" id="TPMT"/>
<dbReference type="DMDM" id="1730006"/>
<dbReference type="jPOST" id="P51580"/>
<dbReference type="MassIVE" id="P51580"/>
<dbReference type="PaxDb" id="9606-ENSP00000312304"/>
<dbReference type="PeptideAtlas" id="P51580"/>
<dbReference type="ProteomicsDB" id="56338"/>
<dbReference type="Pumba" id="P51580"/>
<dbReference type="Antibodypedia" id="10352">
    <property type="antibodies" value="435 antibodies from 32 providers"/>
</dbReference>
<dbReference type="DNASU" id="7172"/>
<dbReference type="Ensembl" id="ENST00000309983.5">
    <property type="protein sequence ID" value="ENSP00000312304.4"/>
    <property type="gene ID" value="ENSG00000137364.5"/>
</dbReference>
<dbReference type="GeneID" id="7172"/>
<dbReference type="KEGG" id="hsa:7172"/>
<dbReference type="MANE-Select" id="ENST00000309983.5">
    <property type="protein sequence ID" value="ENSP00000312304.4"/>
    <property type="RefSeq nucleotide sequence ID" value="NM_000367.5"/>
    <property type="RefSeq protein sequence ID" value="NP_000358.1"/>
</dbReference>
<dbReference type="UCSC" id="uc003ncm.4">
    <property type="organism name" value="human"/>
</dbReference>
<dbReference type="AGR" id="HGNC:12014"/>
<dbReference type="CTD" id="7172"/>
<dbReference type="DisGeNET" id="7172"/>
<dbReference type="GeneCards" id="TPMT"/>
<dbReference type="HGNC" id="HGNC:12014">
    <property type="gene designation" value="TPMT"/>
</dbReference>
<dbReference type="HPA" id="ENSG00000137364">
    <property type="expression patterns" value="Tissue enhanced (kidney, liver, thyroid gland)"/>
</dbReference>
<dbReference type="MalaCards" id="TPMT"/>
<dbReference type="MIM" id="187680">
    <property type="type" value="gene"/>
</dbReference>
<dbReference type="MIM" id="610460">
    <property type="type" value="phenotype"/>
</dbReference>
<dbReference type="neXtProt" id="NX_P51580"/>
<dbReference type="OpenTargets" id="ENSG00000137364"/>
<dbReference type="PharmGKB" id="PA356"/>
<dbReference type="VEuPathDB" id="HostDB:ENSG00000137364"/>
<dbReference type="eggNOG" id="ENOG502QSF5">
    <property type="taxonomic scope" value="Eukaryota"/>
</dbReference>
<dbReference type="GeneTree" id="ENSGT00390000016823"/>
<dbReference type="HOGENOM" id="CLU_085515_2_0_1"/>
<dbReference type="InParanoid" id="P51580"/>
<dbReference type="OMA" id="LWCGDFF"/>
<dbReference type="OrthoDB" id="276151at2759"/>
<dbReference type="PAN-GO" id="P51580">
    <property type="GO annotations" value="1 GO annotation based on evolutionary models"/>
</dbReference>
<dbReference type="PhylomeDB" id="P51580"/>
<dbReference type="TreeFam" id="TF328951"/>
<dbReference type="BioCyc" id="MetaCyc:HS06327-MONOMER"/>
<dbReference type="BRENDA" id="2.1.1.67">
    <property type="organism ID" value="2681"/>
</dbReference>
<dbReference type="PathwayCommons" id="P51580"/>
<dbReference type="Reactome" id="R-HSA-156581">
    <property type="pathway name" value="Methylation"/>
</dbReference>
<dbReference type="Reactome" id="R-HSA-5578995">
    <property type="pathway name" value="Defective TPMT causes TPMT deficiency"/>
</dbReference>
<dbReference type="Reactome" id="R-HSA-9748787">
    <property type="pathway name" value="Azathioprine ADME"/>
</dbReference>
<dbReference type="SABIO-RK" id="P51580"/>
<dbReference type="SignaLink" id="P51580"/>
<dbReference type="BioGRID-ORCS" id="7172">
    <property type="hits" value="9 hits in 1121 CRISPR screens"/>
</dbReference>
<dbReference type="ChiTaRS" id="TPMT">
    <property type="organism name" value="human"/>
</dbReference>
<dbReference type="EvolutionaryTrace" id="P51580"/>
<dbReference type="GeneWiki" id="Thiopurine_methyltransferase"/>
<dbReference type="GenomeRNAi" id="7172"/>
<dbReference type="Pharos" id="P51580">
    <property type="development level" value="Tchem"/>
</dbReference>
<dbReference type="PRO" id="PR:P51580"/>
<dbReference type="Proteomes" id="UP000005640">
    <property type="component" value="Chromosome 6"/>
</dbReference>
<dbReference type="RNAct" id="P51580">
    <property type="molecule type" value="protein"/>
</dbReference>
<dbReference type="Bgee" id="ENSG00000137364">
    <property type="expression patterns" value="Expressed in buccal mucosa cell and 204 other cell types or tissues"/>
</dbReference>
<dbReference type="ExpressionAtlas" id="P51580">
    <property type="expression patterns" value="baseline and differential"/>
</dbReference>
<dbReference type="GO" id="GO:0005829">
    <property type="term" value="C:cytosol"/>
    <property type="evidence" value="ECO:0000304"/>
    <property type="project" value="Reactome"/>
</dbReference>
<dbReference type="GO" id="GO:1904047">
    <property type="term" value="F:S-adenosyl-L-methionine binding"/>
    <property type="evidence" value="ECO:0000314"/>
    <property type="project" value="UniProtKB"/>
</dbReference>
<dbReference type="GO" id="GO:0008119">
    <property type="term" value="F:thiopurine S-methyltransferase activity"/>
    <property type="evidence" value="ECO:0000314"/>
    <property type="project" value="UniProtKB"/>
</dbReference>
<dbReference type="GO" id="GO:0032259">
    <property type="term" value="P:methylation"/>
    <property type="evidence" value="ECO:0000304"/>
    <property type="project" value="Reactome"/>
</dbReference>
<dbReference type="GO" id="GO:0006139">
    <property type="term" value="P:nucleobase-containing compound metabolic process"/>
    <property type="evidence" value="ECO:0000304"/>
    <property type="project" value="ProtInc"/>
</dbReference>
<dbReference type="GO" id="GO:0042178">
    <property type="term" value="P:xenobiotic catabolic process"/>
    <property type="evidence" value="ECO:0000304"/>
    <property type="project" value="Reactome"/>
</dbReference>
<dbReference type="GO" id="GO:0006805">
    <property type="term" value="P:xenobiotic metabolic process"/>
    <property type="evidence" value="ECO:0000314"/>
    <property type="project" value="UniProtKB"/>
</dbReference>
<dbReference type="FunFam" id="3.40.50.150:FF:000101">
    <property type="entry name" value="Thiopurine S-methyltransferase"/>
    <property type="match status" value="1"/>
</dbReference>
<dbReference type="Gene3D" id="3.40.50.150">
    <property type="entry name" value="Vaccinia Virus protein VP39"/>
    <property type="match status" value="1"/>
</dbReference>
<dbReference type="HAMAP" id="MF_00812">
    <property type="entry name" value="Thiopur_methtran"/>
    <property type="match status" value="1"/>
</dbReference>
<dbReference type="InterPro" id="IPR029063">
    <property type="entry name" value="SAM-dependent_MTases_sf"/>
</dbReference>
<dbReference type="InterPro" id="IPR025835">
    <property type="entry name" value="Thiopurine_S-MeTrfase"/>
</dbReference>
<dbReference type="InterPro" id="IPR008854">
    <property type="entry name" value="TPMT"/>
</dbReference>
<dbReference type="PANTHER" id="PTHR10259">
    <property type="entry name" value="THIOPURINE S-METHYLTRANSFERASE"/>
    <property type="match status" value="1"/>
</dbReference>
<dbReference type="PANTHER" id="PTHR10259:SF11">
    <property type="entry name" value="THIOPURINE S-METHYLTRANSFERASE"/>
    <property type="match status" value="1"/>
</dbReference>
<dbReference type="Pfam" id="PF05724">
    <property type="entry name" value="TPMT"/>
    <property type="match status" value="1"/>
</dbReference>
<dbReference type="PIRSF" id="PIRSF023956">
    <property type="entry name" value="Thiopurine_S-methyltransferase"/>
    <property type="match status" value="1"/>
</dbReference>
<dbReference type="SUPFAM" id="SSF53335">
    <property type="entry name" value="S-adenosyl-L-methionine-dependent methyltransferases"/>
    <property type="match status" value="1"/>
</dbReference>
<dbReference type="PROSITE" id="PS51585">
    <property type="entry name" value="SAM_MT_TPMT"/>
    <property type="match status" value="1"/>
</dbReference>
<proteinExistence type="evidence at protein level"/>
<name>TPMT_HUMAN</name>
<sequence>MDGTRTSLDIEEYSDTEVQKNQVLTLEEWQDKWVNGKTAFHQEQGHQLLKKHLDTFLKGKSGLRVFFPLCGKAVEMKWFADRGHSVVGVEISELGIQEFFTEQNLSYSEEPITEIPGTKVFKSSSGNISLYCCSIFDLPRTNIGKFDMIWDRGALVAINPGDRKCYADTMFSLLGKKFQYLLCVLSYDPTKHPGPPFYVPHAEIERLFGKICNIRCLEKVDAFEERHKSWGIDCLFEKLYLLTEK</sequence>
<organism>
    <name type="scientific">Homo sapiens</name>
    <name type="common">Human</name>
    <dbReference type="NCBI Taxonomy" id="9606"/>
    <lineage>
        <taxon>Eukaryota</taxon>
        <taxon>Metazoa</taxon>
        <taxon>Chordata</taxon>
        <taxon>Craniata</taxon>
        <taxon>Vertebrata</taxon>
        <taxon>Euteleostomi</taxon>
        <taxon>Mammalia</taxon>
        <taxon>Eutheria</taxon>
        <taxon>Euarchontoglires</taxon>
        <taxon>Primates</taxon>
        <taxon>Haplorrhini</taxon>
        <taxon>Catarrhini</taxon>
        <taxon>Hominidae</taxon>
        <taxon>Homo</taxon>
    </lineage>
</organism>